<keyword id="KW-0037">Angiogenesis</keyword>
<keyword id="KW-0963">Cytoplasm</keyword>
<keyword id="KW-0217">Developmental protein</keyword>
<keyword id="KW-0221">Differentiation</keyword>
<keyword id="KW-0903">Direct protein sequencing</keyword>
<keyword id="KW-1015">Disulfide bond</keyword>
<keyword id="KW-0238">DNA-binding</keyword>
<keyword id="KW-0255">Endonuclease</keyword>
<keyword id="KW-0378">Hydrolase</keyword>
<keyword id="KW-0540">Nuclease</keyword>
<keyword id="KW-0539">Nucleus</keyword>
<keyword id="KW-0652">Protein synthesis inhibitor</keyword>
<keyword id="KW-0873">Pyrrolidone carboxylic acid</keyword>
<keyword id="KW-1185">Reference proteome</keyword>
<keyword id="KW-0964">Secreted</keyword>
<keyword id="KW-0732">Signal</keyword>
<keyword id="KW-0346">Stress response</keyword>
<accession>P31347</accession>
<accession>W0UUZ5</accession>
<dbReference type="EC" id="3.1.27.-" evidence="1"/>
<dbReference type="EMBL" id="VIYN02003006">
    <property type="status" value="NOT_ANNOTATED_CDS"/>
    <property type="molecule type" value="Genomic_DNA"/>
</dbReference>
<dbReference type="EMBL" id="HG328986">
    <property type="protein sequence ID" value="CDG32062.1"/>
    <property type="molecule type" value="Genomic_DNA"/>
</dbReference>
<dbReference type="PIR" id="S29833">
    <property type="entry name" value="B43825"/>
</dbReference>
<dbReference type="RefSeq" id="XP_002717924.1">
    <property type="nucleotide sequence ID" value="XM_002717878.5"/>
</dbReference>
<dbReference type="RefSeq" id="XP_008267527.1">
    <property type="nucleotide sequence ID" value="XM_008269305.4"/>
</dbReference>
<dbReference type="SMR" id="P31347"/>
<dbReference type="FunCoup" id="P31347">
    <property type="interactions" value="39"/>
</dbReference>
<dbReference type="GeneID" id="100354306"/>
<dbReference type="KEGG" id="ocu:100354306"/>
<dbReference type="CTD" id="283"/>
<dbReference type="InParanoid" id="P31347"/>
<dbReference type="OrthoDB" id="8573660at2759"/>
<dbReference type="Proteomes" id="UP000001811">
    <property type="component" value="Unplaced"/>
</dbReference>
<dbReference type="GO" id="GO:0032311">
    <property type="term" value="C:angiogenin-PRI complex"/>
    <property type="evidence" value="ECO:0000250"/>
    <property type="project" value="UniProtKB"/>
</dbReference>
<dbReference type="GO" id="GO:0005604">
    <property type="term" value="C:basement membrane"/>
    <property type="evidence" value="ECO:0000250"/>
    <property type="project" value="UniProtKB"/>
</dbReference>
<dbReference type="GO" id="GO:0005737">
    <property type="term" value="C:cytoplasm"/>
    <property type="evidence" value="ECO:0000250"/>
    <property type="project" value="UniProtKB"/>
</dbReference>
<dbReference type="GO" id="GO:0010494">
    <property type="term" value="C:cytoplasmic stress granule"/>
    <property type="evidence" value="ECO:0007669"/>
    <property type="project" value="UniProtKB-SubCell"/>
</dbReference>
<dbReference type="GO" id="GO:0030139">
    <property type="term" value="C:endocytic vesicle"/>
    <property type="evidence" value="ECO:0000250"/>
    <property type="project" value="UniProtKB"/>
</dbReference>
<dbReference type="GO" id="GO:0005615">
    <property type="term" value="C:extracellular space"/>
    <property type="evidence" value="ECO:0000250"/>
    <property type="project" value="UniProtKB"/>
</dbReference>
<dbReference type="GO" id="GO:0005730">
    <property type="term" value="C:nucleolus"/>
    <property type="evidence" value="ECO:0000250"/>
    <property type="project" value="UniProtKB"/>
</dbReference>
<dbReference type="GO" id="GO:0005634">
    <property type="term" value="C:nucleus"/>
    <property type="evidence" value="ECO:0000250"/>
    <property type="project" value="UniProtKB"/>
</dbReference>
<dbReference type="GO" id="GO:0003779">
    <property type="term" value="F:actin binding"/>
    <property type="evidence" value="ECO:0000250"/>
    <property type="project" value="UniProtKB"/>
</dbReference>
<dbReference type="GO" id="GO:0005507">
    <property type="term" value="F:copper ion binding"/>
    <property type="evidence" value="ECO:0000250"/>
    <property type="project" value="UniProtKB"/>
</dbReference>
<dbReference type="GO" id="GO:0003677">
    <property type="term" value="F:DNA binding"/>
    <property type="evidence" value="ECO:0007669"/>
    <property type="project" value="UniProtKB-KW"/>
</dbReference>
<dbReference type="GO" id="GO:0004519">
    <property type="term" value="F:endonuclease activity"/>
    <property type="evidence" value="ECO:0007669"/>
    <property type="project" value="UniProtKB-KW"/>
</dbReference>
<dbReference type="GO" id="GO:0008201">
    <property type="term" value="F:heparin binding"/>
    <property type="evidence" value="ECO:0000250"/>
    <property type="project" value="UniProtKB"/>
</dbReference>
<dbReference type="GO" id="GO:0042803">
    <property type="term" value="F:protein homodimerization activity"/>
    <property type="evidence" value="ECO:0000250"/>
    <property type="project" value="UniProtKB"/>
</dbReference>
<dbReference type="GO" id="GO:0004540">
    <property type="term" value="F:RNA nuclease activity"/>
    <property type="evidence" value="ECO:0000250"/>
    <property type="project" value="UniProtKB"/>
</dbReference>
<dbReference type="GO" id="GO:0005102">
    <property type="term" value="F:signaling receptor binding"/>
    <property type="evidence" value="ECO:0000250"/>
    <property type="project" value="UniProtKB"/>
</dbReference>
<dbReference type="GO" id="GO:0004549">
    <property type="term" value="F:tRNA-specific ribonuclease activity"/>
    <property type="evidence" value="ECO:0000250"/>
    <property type="project" value="UniProtKB"/>
</dbReference>
<dbReference type="GO" id="GO:0030041">
    <property type="term" value="P:actin filament polymerization"/>
    <property type="evidence" value="ECO:0000250"/>
    <property type="project" value="UniProtKB"/>
</dbReference>
<dbReference type="GO" id="GO:0001525">
    <property type="term" value="P:angiogenesis"/>
    <property type="evidence" value="ECO:0000250"/>
    <property type="project" value="UniProtKB"/>
</dbReference>
<dbReference type="GO" id="GO:0019731">
    <property type="term" value="P:antibacterial humoral response"/>
    <property type="evidence" value="ECO:0007669"/>
    <property type="project" value="TreeGrafter"/>
</dbReference>
<dbReference type="GO" id="GO:0061844">
    <property type="term" value="P:antimicrobial humoral immune response mediated by antimicrobial peptide"/>
    <property type="evidence" value="ECO:0007669"/>
    <property type="project" value="TreeGrafter"/>
</dbReference>
<dbReference type="GO" id="GO:0050830">
    <property type="term" value="P:defense response to Gram-positive bacterium"/>
    <property type="evidence" value="ECO:0007669"/>
    <property type="project" value="TreeGrafter"/>
</dbReference>
<dbReference type="GO" id="GO:0071425">
    <property type="term" value="P:hematopoietic stem cell proliferation"/>
    <property type="evidence" value="ECO:0000250"/>
    <property type="project" value="UniProtKB"/>
</dbReference>
<dbReference type="GO" id="GO:0045087">
    <property type="term" value="P:innate immune response"/>
    <property type="evidence" value="ECO:0007669"/>
    <property type="project" value="TreeGrafter"/>
</dbReference>
<dbReference type="GO" id="GO:0043066">
    <property type="term" value="P:negative regulation of apoptotic process"/>
    <property type="evidence" value="ECO:0000250"/>
    <property type="project" value="UniProtKB"/>
</dbReference>
<dbReference type="GO" id="GO:0048662">
    <property type="term" value="P:negative regulation of smooth muscle cell proliferation"/>
    <property type="evidence" value="ECO:0000250"/>
    <property type="project" value="UniProtKB"/>
</dbReference>
<dbReference type="GO" id="GO:0032055">
    <property type="term" value="P:negative regulation of translation in response to stress"/>
    <property type="evidence" value="ECO:0000250"/>
    <property type="project" value="UniProtKB"/>
</dbReference>
<dbReference type="GO" id="GO:0001938">
    <property type="term" value="P:positive regulation of endothelial cell proliferation"/>
    <property type="evidence" value="ECO:0000250"/>
    <property type="project" value="UniProtKB"/>
</dbReference>
<dbReference type="GO" id="GO:0050714">
    <property type="term" value="P:positive regulation of protein secretion"/>
    <property type="evidence" value="ECO:0000250"/>
    <property type="project" value="UniProtKB"/>
</dbReference>
<dbReference type="GO" id="GO:0001666">
    <property type="term" value="P:response to hypoxia"/>
    <property type="evidence" value="ECO:0000250"/>
    <property type="project" value="UniProtKB"/>
</dbReference>
<dbReference type="GO" id="GO:0009303">
    <property type="term" value="P:rRNA transcription"/>
    <property type="evidence" value="ECO:0000250"/>
    <property type="project" value="UniProtKB"/>
</dbReference>
<dbReference type="GO" id="GO:0023052">
    <property type="term" value="P:signaling"/>
    <property type="evidence" value="ECO:0000250"/>
    <property type="project" value="UniProtKB"/>
</dbReference>
<dbReference type="GO" id="GO:0034063">
    <property type="term" value="P:stress granule assembly"/>
    <property type="evidence" value="ECO:0000250"/>
    <property type="project" value="UniProtKB"/>
</dbReference>
<dbReference type="CDD" id="cd06265">
    <property type="entry name" value="RNase_A_canonical"/>
    <property type="match status" value="1"/>
</dbReference>
<dbReference type="FunFam" id="3.10.130.10:FF:000001">
    <property type="entry name" value="Ribonuclease pancreatic"/>
    <property type="match status" value="1"/>
</dbReference>
<dbReference type="Gene3D" id="3.10.130.10">
    <property type="entry name" value="Ribonuclease A-like domain"/>
    <property type="match status" value="1"/>
</dbReference>
<dbReference type="InterPro" id="IPR001427">
    <property type="entry name" value="RNaseA"/>
</dbReference>
<dbReference type="InterPro" id="IPR036816">
    <property type="entry name" value="RNaseA-like_dom_sf"/>
</dbReference>
<dbReference type="InterPro" id="IPR023411">
    <property type="entry name" value="RNaseA_AS"/>
</dbReference>
<dbReference type="InterPro" id="IPR023412">
    <property type="entry name" value="RNaseA_domain"/>
</dbReference>
<dbReference type="PANTHER" id="PTHR11437:SF60">
    <property type="entry name" value="ANGIOGENIN"/>
    <property type="match status" value="1"/>
</dbReference>
<dbReference type="PANTHER" id="PTHR11437">
    <property type="entry name" value="RIBONUCLEASE"/>
    <property type="match status" value="1"/>
</dbReference>
<dbReference type="Pfam" id="PF00074">
    <property type="entry name" value="RnaseA"/>
    <property type="match status" value="1"/>
</dbReference>
<dbReference type="PRINTS" id="PR00794">
    <property type="entry name" value="RIBONUCLEASE"/>
</dbReference>
<dbReference type="SMART" id="SM00092">
    <property type="entry name" value="RNAse_Pc"/>
    <property type="match status" value="1"/>
</dbReference>
<dbReference type="SUPFAM" id="SSF54076">
    <property type="entry name" value="RNase A-like"/>
    <property type="match status" value="1"/>
</dbReference>
<dbReference type="PROSITE" id="PS00127">
    <property type="entry name" value="RNASE_PANCREATIC"/>
    <property type="match status" value="1"/>
</dbReference>
<protein>
    <recommendedName>
        <fullName evidence="5">Angiogenin</fullName>
        <ecNumber evidence="1">3.1.27.-</ecNumber>
    </recommendedName>
    <alternativeName>
        <fullName>Ribonuclease 5</fullName>
        <shortName>RNase 5</shortName>
    </alternativeName>
    <alternativeName>
        <fullName evidence="4">Ribonuclease-A A1</fullName>
        <shortName evidence="4">RAA1</shortName>
    </alternativeName>
</protein>
<proteinExistence type="evidence at protein level"/>
<name>ANGI_RABIT</name>
<gene>
    <name type="primary">ANG</name>
</gene>
<evidence type="ECO:0000250" key="1">
    <source>
        <dbReference type="UniProtKB" id="P03950"/>
    </source>
</evidence>
<evidence type="ECO:0000250" key="2">
    <source>
        <dbReference type="UniProtKB" id="P21570"/>
    </source>
</evidence>
<evidence type="ECO:0000269" key="3">
    <source>
    </source>
</evidence>
<evidence type="ECO:0000303" key="4">
    <source>
    </source>
</evidence>
<evidence type="ECO:0000303" key="5">
    <source>
    </source>
</evidence>
<evidence type="ECO:0000305" key="6"/>
<comment type="function">
    <text evidence="1 2 3">Secreted ribonuclease that can either promote or restrict cell proliferation of target cells, depending on the context (By similarity). Endocytosed in target cells via its receptor PLXNB2 and translocates to the cytoplasm or nucleus (By similarity). Under stress conditions, localizes to the cytoplasm and promotes the assembly of stress granules (SGs): specifically cleaves a subset of tRNAs within anticodon loops to produce tRNA-derived stress-induced fragments (tiRNAs), resulting in translation repression and inhibition of cell proliferation (By similarity). tiRNas also prevent formation of apoptosome, thereby promoting cell survival (By similarity). Preferentially cleaves RNAs between a pyrimidine and an adenosine residue, suggesting that it cleaves the anticodon loop of tRNA(Ala) (32-UUAGCAU-38) after positions 33 and 36 (By similarity). Cleaves a subset of tRNAs, including tRNA(Ala), tRNA(Glu), tRNA(Gly), tRNA(Lys), tRNA(Val), tRNA(His), tRNA(Asp) and tRNA(Sec) (By similarity). Under growth conditions and in differentiated cells, translocates to the nucleus and stimulates ribosomal RNA (rRNA) transcription, including that containing the initiation site sequences of 45S rRNA, thereby promoting cell growth and proliferation (By similarity). Angiogenin induces vascularization of normal and malignant tissues via its ability to promote rRNA transcription (PubMed:8448182). Involved in hematopoietic stem and progenitor cell (HSPC) growth and survival by promoting rRNA transcription in growth conditions and inhibiting translation in response to stress, respectively (By similarity). Mediates the crosstalk between myeloid and intestinal epithelial cells to protect the intestinal epithelial barrier integrity: secreted by myeloid cells and promotes intestinal epithelial cells proliferation and survival (By similarity). Also mediates osteoclast-endothelial cell crosstalk in growing bone: produced by osteoclasts and protects the neighboring vascular cells against senescence by promoting rRNA transcription (By similarity).</text>
</comment>
<comment type="activity regulation">
    <text evidence="1">Has weak tRNA ribonuclease activity by itself due to partial autoinhibition by its C-terminus, which folds into a short alpha-helix that partially occludes the substrate-binding site. In absence of stress, the ribonuclease activity is inhibited by RNH1 in the cytoplasm. In response to stress, dissociates from RNH1 in the cytoplasm and associates with cytoplasmic ribosomes with vacant A-sites: ribosomes directly activate the tRNA ribonuclease activity of ANG by refolding the C-terminal alpha-helix. In response to stress, the angiogenic activity of ANG is inhibited by RNH1 in the nucleus.</text>
</comment>
<comment type="subunit">
    <text evidence="1">Homodimer. Interacts with RNH1; inhibiting ANG ribonuclease activity. Interacts with PCNA.</text>
</comment>
<comment type="subcellular location">
    <subcellularLocation>
        <location evidence="1">Secreted</location>
    </subcellularLocation>
    <subcellularLocation>
        <location evidence="1">Nucleus</location>
    </subcellularLocation>
    <subcellularLocation>
        <location evidence="1">Nucleus</location>
        <location evidence="1">Nucleolus</location>
    </subcellularLocation>
    <subcellularLocation>
        <location evidence="1">Cytoplasm</location>
        <location evidence="1">Stress granule</location>
    </subcellularLocation>
    <text evidence="1">The secreted protein is rapidly endocytosed by target cells following interaction with PLXNB2 receptor and translocated to the cytoplasm and nucleus. In the nucleus, accumulates in the nucleolus and binds to DNA.</text>
</comment>
<comment type="similarity">
    <text evidence="6">Belongs to the pancreatic ribonuclease family.</text>
</comment>
<sequence length="149" mass="16724">MVMGLGPLVLIFVLGLGVTPPTLAQDDSRYKHFLTQHYDAKPFGRNDRYCETMMKRRDLTSPCKDTNTFVHGNKGSIKDVCEDKNGKPYGKNFRISKSSFQVTTCKHVGGSPWPPCRYRATSGSRNIVIACENGLPVHFDESVFQQKAH</sequence>
<reference key="1">
    <citation type="journal article" date="2011" name="Nature">
        <title>A high-resolution map of human evolutionary constraint using 29 mammals.</title>
        <authorList>
            <person name="Lindblad-Toh K."/>
            <person name="Garber M."/>
            <person name="Zuk O."/>
            <person name="Lin M.F."/>
            <person name="Parker B.J."/>
            <person name="Washietl S."/>
            <person name="Kheradpour P."/>
            <person name="Ernst J."/>
            <person name="Jordan G."/>
            <person name="Mauceli E."/>
            <person name="Ward L.D."/>
            <person name="Lowe C.B."/>
            <person name="Holloway A.K."/>
            <person name="Clamp M."/>
            <person name="Gnerre S."/>
            <person name="Alfoldi J."/>
            <person name="Beal K."/>
            <person name="Chang J."/>
            <person name="Clawson H."/>
            <person name="Cuff J."/>
            <person name="Di Palma F."/>
            <person name="Fitzgerald S."/>
            <person name="Flicek P."/>
            <person name="Guttman M."/>
            <person name="Hubisz M.J."/>
            <person name="Jaffe D.B."/>
            <person name="Jungreis I."/>
            <person name="Kent W.J."/>
            <person name="Kostka D."/>
            <person name="Lara M."/>
            <person name="Martins A.L."/>
            <person name="Massingham T."/>
            <person name="Moltke I."/>
            <person name="Raney B.J."/>
            <person name="Rasmussen M.D."/>
            <person name="Robinson J."/>
            <person name="Stark A."/>
            <person name="Vilella A.J."/>
            <person name="Wen J."/>
            <person name="Xie X."/>
            <person name="Zody M.C."/>
            <person name="Baldwin J."/>
            <person name="Bloom T."/>
            <person name="Chin C.W."/>
            <person name="Heiman D."/>
            <person name="Nicol R."/>
            <person name="Nusbaum C."/>
            <person name="Young S."/>
            <person name="Wilkinson J."/>
            <person name="Worley K.C."/>
            <person name="Kovar C.L."/>
            <person name="Muzny D.M."/>
            <person name="Gibbs R.A."/>
            <person name="Cree A."/>
            <person name="Dihn H.H."/>
            <person name="Fowler G."/>
            <person name="Jhangiani S."/>
            <person name="Joshi V."/>
            <person name="Lee S."/>
            <person name="Lewis L.R."/>
            <person name="Nazareth L.V."/>
            <person name="Okwuonu G."/>
            <person name="Santibanez J."/>
            <person name="Warren W.C."/>
            <person name="Mardis E.R."/>
            <person name="Weinstock G.M."/>
            <person name="Wilson R.K."/>
            <person name="Delehaunty K."/>
            <person name="Dooling D."/>
            <person name="Fronik C."/>
            <person name="Fulton L."/>
            <person name="Fulton B."/>
            <person name="Graves T."/>
            <person name="Minx P."/>
            <person name="Sodergren E."/>
            <person name="Birney E."/>
            <person name="Margulies E.H."/>
            <person name="Herrero J."/>
            <person name="Green E.D."/>
            <person name="Haussler D."/>
            <person name="Siepel A."/>
            <person name="Goldman N."/>
            <person name="Pollard K.S."/>
            <person name="Pedersen J.S."/>
            <person name="Lander E.S."/>
            <person name="Kellis M."/>
        </authorList>
    </citation>
    <scope>NUCLEOTIDE SEQUENCE [LARGE SCALE GENOMIC DNA]</scope>
</reference>
<reference key="2">
    <citation type="journal article" date="1993" name="Biochim. Biophys. Acta">
        <title>Characterization and sequencing of rabbit, pig and mouse angiogenins: discernment of functionally important residues and regions.</title>
        <authorList>
            <person name="Bond M.D."/>
            <person name="Strydom D.J."/>
            <person name="Vallee B.L."/>
        </authorList>
    </citation>
    <scope>PROTEIN SEQUENCE OF 25-149</scope>
    <scope>PYROGLUTAMATE FORMATION AT GLN-25</scope>
    <scope>FUNCTION</scope>
    <source>
        <tissue>Serum</tissue>
    </source>
</reference>
<reference key="3">
    <citation type="journal article" date="2014" name="Mol. Genet. Genomics">
        <title>Comparative genomic analysis of eutherian ribonuclease A genes.</title>
        <authorList>
            <person name="Premzl M."/>
        </authorList>
    </citation>
    <scope>IDENTIFICATION</scope>
</reference>
<organism>
    <name type="scientific">Oryctolagus cuniculus</name>
    <name type="common">Rabbit</name>
    <dbReference type="NCBI Taxonomy" id="9986"/>
    <lineage>
        <taxon>Eukaryota</taxon>
        <taxon>Metazoa</taxon>
        <taxon>Chordata</taxon>
        <taxon>Craniata</taxon>
        <taxon>Vertebrata</taxon>
        <taxon>Euteleostomi</taxon>
        <taxon>Mammalia</taxon>
        <taxon>Eutheria</taxon>
        <taxon>Euarchontoglires</taxon>
        <taxon>Glires</taxon>
        <taxon>Lagomorpha</taxon>
        <taxon>Leporidae</taxon>
        <taxon>Oryctolagus</taxon>
    </lineage>
</organism>
<feature type="signal peptide" evidence="3">
    <location>
        <begin position="1"/>
        <end position="24"/>
    </location>
</feature>
<feature type="chain" id="PRO_0000057158" description="Angiogenin" evidence="3">
    <location>
        <begin position="25"/>
        <end position="149"/>
    </location>
</feature>
<feature type="short sequence motif" description="Nucleolar localization signal" evidence="1">
    <location>
        <begin position="55"/>
        <end position="59"/>
    </location>
</feature>
<feature type="active site" description="Proton acceptor" evidence="1">
    <location>
        <position position="37"/>
    </location>
</feature>
<feature type="active site" description="Proton donor" evidence="1">
    <location>
        <position position="138"/>
    </location>
</feature>
<feature type="binding site" evidence="1">
    <location>
        <position position="45"/>
    </location>
    <ligand>
        <name>tRNA</name>
        <dbReference type="ChEBI" id="CHEBI:17843"/>
    </ligand>
</feature>
<feature type="binding site" evidence="1">
    <location>
        <position position="105"/>
    </location>
    <ligand>
        <name>tRNA</name>
        <dbReference type="ChEBI" id="CHEBI:17843"/>
    </ligand>
</feature>
<feature type="binding site" evidence="1">
    <location>
        <position position="127"/>
    </location>
    <ligand>
        <name>tRNA</name>
        <dbReference type="ChEBI" id="CHEBI:17843"/>
    </ligand>
</feature>
<feature type="modified residue" description="Pyrrolidone carboxylic acid" evidence="3">
    <location>
        <position position="25"/>
    </location>
</feature>
<feature type="disulfide bond" evidence="1">
    <location>
        <begin position="50"/>
        <end position="105"/>
    </location>
</feature>
<feature type="disulfide bond" evidence="1">
    <location>
        <begin position="63"/>
        <end position="116"/>
    </location>
</feature>
<feature type="disulfide bond" evidence="1">
    <location>
        <begin position="81"/>
        <end position="131"/>
    </location>
</feature>